<comment type="subcellular location">
    <subcellularLocation>
        <location evidence="3">Mitochondrion membrane</location>
        <topology evidence="3">Single-pass membrane protein</topology>
    </subcellularLocation>
</comment>
<comment type="disruption phenotype">
    <text evidence="5">Increases frequency of mitochondrial genome loss.</text>
</comment>
<comment type="miscellaneous">
    <text evidence="4">Present with 2820 molecules/cell in log phase SD medium.</text>
</comment>
<comment type="similarity">
    <text evidence="6">Belongs to the AIM34 family.</text>
</comment>
<organism>
    <name type="scientific">Saccharomyces cerevisiae (strain ATCC 204508 / S288c)</name>
    <name type="common">Baker's yeast</name>
    <dbReference type="NCBI Taxonomy" id="559292"/>
    <lineage>
        <taxon>Eukaryota</taxon>
        <taxon>Fungi</taxon>
        <taxon>Dikarya</taxon>
        <taxon>Ascomycota</taxon>
        <taxon>Saccharomycotina</taxon>
        <taxon>Saccharomycetes</taxon>
        <taxon>Saccharomycetales</taxon>
        <taxon>Saccharomycetaceae</taxon>
        <taxon>Saccharomyces</taxon>
    </lineage>
</organism>
<name>AIM34_YEAST</name>
<evidence type="ECO:0000255" key="1"/>
<evidence type="ECO:0000255" key="2">
    <source>
        <dbReference type="PROSITE-ProRule" id="PRU00186"/>
    </source>
</evidence>
<evidence type="ECO:0000269" key="3">
    <source>
    </source>
</evidence>
<evidence type="ECO:0000269" key="4">
    <source>
    </source>
</evidence>
<evidence type="ECO:0000269" key="5">
    <source>
    </source>
</evidence>
<evidence type="ECO:0000305" key="6"/>
<accession>Q03673</accession>
<accession>D6VZH8</accession>
<proteinExistence type="evidence at protein level"/>
<keyword id="KW-0472">Membrane</keyword>
<keyword id="KW-0496">Mitochondrion</keyword>
<keyword id="KW-1185">Reference proteome</keyword>
<keyword id="KW-0809">Transit peptide</keyword>
<keyword id="KW-0812">Transmembrane</keyword>
<keyword id="KW-1133">Transmembrane helix</keyword>
<dbReference type="EMBL" id="Z48613">
    <property type="protein sequence ID" value="CAA88518.1"/>
    <property type="molecule type" value="Genomic_DNA"/>
</dbReference>
<dbReference type="EMBL" id="BK006946">
    <property type="protein sequence ID" value="DAA09902.1"/>
    <property type="molecule type" value="Genomic_DNA"/>
</dbReference>
<dbReference type="PIR" id="S53032">
    <property type="entry name" value="S53032"/>
</dbReference>
<dbReference type="RefSeq" id="NP_013716.1">
    <property type="nucleotide sequence ID" value="NM_001182499.1"/>
</dbReference>
<dbReference type="SMR" id="Q03673"/>
<dbReference type="BioGRID" id="35173">
    <property type="interactions" value="207"/>
</dbReference>
<dbReference type="DIP" id="DIP-4514N"/>
<dbReference type="FunCoup" id="Q03673">
    <property type="interactions" value="66"/>
</dbReference>
<dbReference type="IntAct" id="Q03673">
    <property type="interactions" value="8"/>
</dbReference>
<dbReference type="MINT" id="Q03673"/>
<dbReference type="STRING" id="4932.YMR003W"/>
<dbReference type="PaxDb" id="4932-YMR003W"/>
<dbReference type="PeptideAtlas" id="Q03673"/>
<dbReference type="EnsemblFungi" id="YMR003W_mRNA">
    <property type="protein sequence ID" value="YMR003W"/>
    <property type="gene ID" value="YMR003W"/>
</dbReference>
<dbReference type="GeneID" id="855015"/>
<dbReference type="KEGG" id="sce:YMR003W"/>
<dbReference type="AGR" id="SGD:S000004605"/>
<dbReference type="SGD" id="S000004605">
    <property type="gene designation" value="AIM34"/>
</dbReference>
<dbReference type="VEuPathDB" id="FungiDB:YMR003W"/>
<dbReference type="eggNOG" id="ENOG502S5IP">
    <property type="taxonomic scope" value="Eukaryota"/>
</dbReference>
<dbReference type="HOGENOM" id="CLU_119188_0_0_1"/>
<dbReference type="InParanoid" id="Q03673"/>
<dbReference type="OrthoDB" id="3993201at2759"/>
<dbReference type="BioCyc" id="YEAST:G3O-32714-MONOMER"/>
<dbReference type="BioGRID-ORCS" id="855015">
    <property type="hits" value="0 hits in 10 CRISPR screens"/>
</dbReference>
<dbReference type="PRO" id="PR:Q03673"/>
<dbReference type="Proteomes" id="UP000002311">
    <property type="component" value="Chromosome XIII"/>
</dbReference>
<dbReference type="RNAct" id="Q03673">
    <property type="molecule type" value="protein"/>
</dbReference>
<dbReference type="GO" id="GO:0031966">
    <property type="term" value="C:mitochondrial membrane"/>
    <property type="evidence" value="ECO:0007669"/>
    <property type="project" value="UniProtKB-SubCell"/>
</dbReference>
<dbReference type="GO" id="GO:0005739">
    <property type="term" value="C:mitochondrion"/>
    <property type="evidence" value="ECO:0007005"/>
    <property type="project" value="SGD"/>
</dbReference>
<dbReference type="FunFam" id="1.10.720.30:FF:000034">
    <property type="entry name" value="Altered inheritance of mitochondria protein 34, mitochondrial"/>
    <property type="match status" value="1"/>
</dbReference>
<dbReference type="Gene3D" id="1.10.720.30">
    <property type="entry name" value="SAP domain"/>
    <property type="match status" value="1"/>
</dbReference>
<dbReference type="InterPro" id="IPR003034">
    <property type="entry name" value="SAP_dom"/>
</dbReference>
<dbReference type="InterPro" id="IPR036361">
    <property type="entry name" value="SAP_dom_sf"/>
</dbReference>
<dbReference type="Pfam" id="PF02037">
    <property type="entry name" value="SAP"/>
    <property type="match status" value="1"/>
</dbReference>
<dbReference type="SMART" id="SM00513">
    <property type="entry name" value="SAP"/>
    <property type="match status" value="1"/>
</dbReference>
<dbReference type="SUPFAM" id="SSF68906">
    <property type="entry name" value="SAP domain"/>
    <property type="match status" value="1"/>
</dbReference>
<dbReference type="PROSITE" id="PS50800">
    <property type="entry name" value="SAP"/>
    <property type="match status" value="1"/>
</dbReference>
<sequence>MSISLLGRIVSQQFSGIRAAEPGRSLYLPFTLLLKQPGAYKVSLHRYVHSTQTKSHLSFLMNNNDITPFQKFTVKVLKEQCKSRGLKLSGRKSDLLQRLITHDSCSNKKSSVKINEPKKKRILINDPIKITKKLVSDKTFRTIEKNISSLQNTPVIETPCDVHSHLQPRDRIFLLGFFMLSCLWWNLEPQESKPTIDH</sequence>
<reference key="1">
    <citation type="journal article" date="1997" name="Nature">
        <title>The nucleotide sequence of Saccharomyces cerevisiae chromosome XIII.</title>
        <authorList>
            <person name="Bowman S."/>
            <person name="Churcher C.M."/>
            <person name="Badcock K."/>
            <person name="Brown D."/>
            <person name="Chillingworth T."/>
            <person name="Connor R."/>
            <person name="Dedman K."/>
            <person name="Devlin K."/>
            <person name="Gentles S."/>
            <person name="Hamlin N."/>
            <person name="Hunt S."/>
            <person name="Jagels K."/>
            <person name="Lye G."/>
            <person name="Moule S."/>
            <person name="Odell C."/>
            <person name="Pearson D."/>
            <person name="Rajandream M.A."/>
            <person name="Rice P."/>
            <person name="Skelton J."/>
            <person name="Walsh S.V."/>
            <person name="Whitehead S."/>
            <person name="Barrell B.G."/>
        </authorList>
    </citation>
    <scope>NUCLEOTIDE SEQUENCE [LARGE SCALE GENOMIC DNA]</scope>
    <source>
        <strain>ATCC 204508 / S288c</strain>
    </source>
</reference>
<reference key="2">
    <citation type="journal article" date="2014" name="G3 (Bethesda)">
        <title>The reference genome sequence of Saccharomyces cerevisiae: Then and now.</title>
        <authorList>
            <person name="Engel S.R."/>
            <person name="Dietrich F.S."/>
            <person name="Fisk D.G."/>
            <person name="Binkley G."/>
            <person name="Balakrishnan R."/>
            <person name="Costanzo M.C."/>
            <person name="Dwight S.S."/>
            <person name="Hitz B.C."/>
            <person name="Karra K."/>
            <person name="Nash R.S."/>
            <person name="Weng S."/>
            <person name="Wong E.D."/>
            <person name="Lloyd P."/>
            <person name="Skrzypek M.S."/>
            <person name="Miyasato S.R."/>
            <person name="Simison M."/>
            <person name="Cherry J.M."/>
        </authorList>
    </citation>
    <scope>GENOME REANNOTATION</scope>
    <source>
        <strain>ATCC 204508 / S288c</strain>
    </source>
</reference>
<reference key="3">
    <citation type="journal article" date="2003" name="Nature">
        <title>Global analysis of protein localization in budding yeast.</title>
        <authorList>
            <person name="Huh W.-K."/>
            <person name="Falvo J.V."/>
            <person name="Gerke L.C."/>
            <person name="Carroll A.S."/>
            <person name="Howson R.W."/>
            <person name="Weissman J.S."/>
            <person name="O'Shea E.K."/>
        </authorList>
    </citation>
    <scope>SUBCELLULAR LOCATION [LARGE SCALE ANALYSIS]</scope>
</reference>
<reference key="4">
    <citation type="journal article" date="2003" name="Nature">
        <title>Global analysis of protein expression in yeast.</title>
        <authorList>
            <person name="Ghaemmaghami S."/>
            <person name="Huh W.-K."/>
            <person name="Bower K."/>
            <person name="Howson R.W."/>
            <person name="Belle A."/>
            <person name="Dephoure N."/>
            <person name="O'Shea E.K."/>
            <person name="Weissman J.S."/>
        </authorList>
    </citation>
    <scope>LEVEL OF PROTEIN EXPRESSION [LARGE SCALE ANALYSIS]</scope>
</reference>
<reference key="5">
    <citation type="journal article" date="2009" name="PLoS Genet.">
        <title>Computationally driven, quantitative experiments discover genes required for mitochondrial biogenesis.</title>
        <authorList>
            <person name="Hess D.C."/>
            <person name="Myers C.L."/>
            <person name="Huttenhower C."/>
            <person name="Hibbs M.A."/>
            <person name="Hayes A.P."/>
            <person name="Paw J."/>
            <person name="Clore J.J."/>
            <person name="Mendoza R.M."/>
            <person name="Luis B.S."/>
            <person name="Nislow C."/>
            <person name="Giaever G."/>
            <person name="Costanzo M."/>
            <person name="Troyanskaya O.G."/>
            <person name="Caudy A.A."/>
        </authorList>
    </citation>
    <scope>DISRUPTION PHENOTYPE</scope>
</reference>
<feature type="transit peptide" description="Mitochondrion" evidence="1">
    <location>
        <begin position="1"/>
        <end position="55"/>
    </location>
</feature>
<feature type="chain" id="PRO_0000203268" description="Altered inheritance of mitochondria protein 34, mitochondrial">
    <location>
        <begin position="56"/>
        <end position="198"/>
    </location>
</feature>
<feature type="transmembrane region" description="Helical" evidence="1">
    <location>
        <begin position="172"/>
        <end position="187"/>
    </location>
</feature>
<feature type="domain" description="SAP" evidence="2">
    <location>
        <begin position="69"/>
        <end position="103"/>
    </location>
</feature>
<protein>
    <recommendedName>
        <fullName>Altered inheritance of mitochondria protein 34, mitochondrial</fullName>
    </recommendedName>
</protein>
<gene>
    <name type="primary">AIM34</name>
    <name type="ordered locus">YMR003W</name>
    <name type="ORF">YM8270.05</name>
</gene>